<protein>
    <recommendedName>
        <fullName evidence="1">Large ribosomal subunit protein uL4</fullName>
    </recommendedName>
    <alternativeName>
        <fullName evidence="3">50S ribosomal protein L4</fullName>
    </alternativeName>
</protein>
<accession>A6TWI1</accession>
<feature type="chain" id="PRO_1000067589" description="Large ribosomal subunit protein uL4">
    <location>
        <begin position="1"/>
        <end position="207"/>
    </location>
</feature>
<feature type="region of interest" description="Disordered" evidence="2">
    <location>
        <begin position="43"/>
        <end position="72"/>
    </location>
</feature>
<feature type="compositionally biased region" description="Polar residues" evidence="2">
    <location>
        <begin position="43"/>
        <end position="52"/>
    </location>
</feature>
<feature type="compositionally biased region" description="Basic residues" evidence="2">
    <location>
        <begin position="60"/>
        <end position="71"/>
    </location>
</feature>
<sequence length="207" mass="22832">MPKVAVYNVSGQKVSEMELSENIFGVEVNEHVLYEAVKNQLANKRQGTQSAKTRAEVRGGGRKPWKQKGTGRARAGTIRSPLWIGGGTVFAPKPRDHSYTLPRKVKRLALKSALTSKVNNEELLVLDELSLDTPKTKDMVNILKNLNADKKVLLVVGEKNEAIIKSASNIPGVTTALVNTINVYDILNHDKFIITKDAVEKVEEVYA</sequence>
<name>RL4_ALKMQ</name>
<evidence type="ECO:0000255" key="1">
    <source>
        <dbReference type="HAMAP-Rule" id="MF_01328"/>
    </source>
</evidence>
<evidence type="ECO:0000256" key="2">
    <source>
        <dbReference type="SAM" id="MobiDB-lite"/>
    </source>
</evidence>
<evidence type="ECO:0000305" key="3"/>
<keyword id="KW-1185">Reference proteome</keyword>
<keyword id="KW-0687">Ribonucleoprotein</keyword>
<keyword id="KW-0689">Ribosomal protein</keyword>
<keyword id="KW-0694">RNA-binding</keyword>
<keyword id="KW-0699">rRNA-binding</keyword>
<dbReference type="EMBL" id="CP000724">
    <property type="protein sequence ID" value="ABR50549.1"/>
    <property type="molecule type" value="Genomic_DNA"/>
</dbReference>
<dbReference type="RefSeq" id="WP_012065440.1">
    <property type="nucleotide sequence ID" value="NC_009633.1"/>
</dbReference>
<dbReference type="SMR" id="A6TWI1"/>
<dbReference type="STRING" id="293826.Amet_4477"/>
<dbReference type="KEGG" id="amt:Amet_4477"/>
<dbReference type="eggNOG" id="COG0088">
    <property type="taxonomic scope" value="Bacteria"/>
</dbReference>
<dbReference type="HOGENOM" id="CLU_041575_5_2_9"/>
<dbReference type="OrthoDB" id="9803201at2"/>
<dbReference type="Proteomes" id="UP000001572">
    <property type="component" value="Chromosome"/>
</dbReference>
<dbReference type="GO" id="GO:1990904">
    <property type="term" value="C:ribonucleoprotein complex"/>
    <property type="evidence" value="ECO:0007669"/>
    <property type="project" value="UniProtKB-KW"/>
</dbReference>
<dbReference type="GO" id="GO:0005840">
    <property type="term" value="C:ribosome"/>
    <property type="evidence" value="ECO:0007669"/>
    <property type="project" value="UniProtKB-KW"/>
</dbReference>
<dbReference type="GO" id="GO:0019843">
    <property type="term" value="F:rRNA binding"/>
    <property type="evidence" value="ECO:0007669"/>
    <property type="project" value="UniProtKB-UniRule"/>
</dbReference>
<dbReference type="GO" id="GO:0003735">
    <property type="term" value="F:structural constituent of ribosome"/>
    <property type="evidence" value="ECO:0007669"/>
    <property type="project" value="InterPro"/>
</dbReference>
<dbReference type="GO" id="GO:0006412">
    <property type="term" value="P:translation"/>
    <property type="evidence" value="ECO:0007669"/>
    <property type="project" value="UniProtKB-UniRule"/>
</dbReference>
<dbReference type="Gene3D" id="3.40.1370.10">
    <property type="match status" value="1"/>
</dbReference>
<dbReference type="HAMAP" id="MF_01328_B">
    <property type="entry name" value="Ribosomal_uL4_B"/>
    <property type="match status" value="1"/>
</dbReference>
<dbReference type="InterPro" id="IPR002136">
    <property type="entry name" value="Ribosomal_uL4"/>
</dbReference>
<dbReference type="InterPro" id="IPR013005">
    <property type="entry name" value="Ribosomal_uL4-like"/>
</dbReference>
<dbReference type="InterPro" id="IPR023574">
    <property type="entry name" value="Ribosomal_uL4_dom_sf"/>
</dbReference>
<dbReference type="NCBIfam" id="TIGR03953">
    <property type="entry name" value="rplD_bact"/>
    <property type="match status" value="1"/>
</dbReference>
<dbReference type="PANTHER" id="PTHR10746">
    <property type="entry name" value="50S RIBOSOMAL PROTEIN L4"/>
    <property type="match status" value="1"/>
</dbReference>
<dbReference type="PANTHER" id="PTHR10746:SF6">
    <property type="entry name" value="LARGE RIBOSOMAL SUBUNIT PROTEIN UL4M"/>
    <property type="match status" value="1"/>
</dbReference>
<dbReference type="Pfam" id="PF00573">
    <property type="entry name" value="Ribosomal_L4"/>
    <property type="match status" value="1"/>
</dbReference>
<dbReference type="SUPFAM" id="SSF52166">
    <property type="entry name" value="Ribosomal protein L4"/>
    <property type="match status" value="1"/>
</dbReference>
<comment type="function">
    <text evidence="1">One of the primary rRNA binding proteins, this protein initially binds near the 5'-end of the 23S rRNA. It is important during the early stages of 50S assembly. It makes multiple contacts with different domains of the 23S rRNA in the assembled 50S subunit and ribosome.</text>
</comment>
<comment type="function">
    <text evidence="1">Forms part of the polypeptide exit tunnel.</text>
</comment>
<comment type="subunit">
    <text evidence="1">Part of the 50S ribosomal subunit.</text>
</comment>
<comment type="similarity">
    <text evidence="1">Belongs to the universal ribosomal protein uL4 family.</text>
</comment>
<reference key="1">
    <citation type="journal article" date="2016" name="Genome Announc.">
        <title>Complete genome sequence of Alkaliphilus metalliredigens strain QYMF, an alkaliphilic and metal-reducing bacterium isolated from borax-contaminated leachate ponds.</title>
        <authorList>
            <person name="Hwang C."/>
            <person name="Copeland A."/>
            <person name="Lucas S."/>
            <person name="Lapidus A."/>
            <person name="Barry K."/>
            <person name="Detter J.C."/>
            <person name="Glavina Del Rio T."/>
            <person name="Hammon N."/>
            <person name="Israni S."/>
            <person name="Dalin E."/>
            <person name="Tice H."/>
            <person name="Pitluck S."/>
            <person name="Chertkov O."/>
            <person name="Brettin T."/>
            <person name="Bruce D."/>
            <person name="Han C."/>
            <person name="Schmutz J."/>
            <person name="Larimer F."/>
            <person name="Land M.L."/>
            <person name="Hauser L."/>
            <person name="Kyrpides N."/>
            <person name="Mikhailova N."/>
            <person name="Ye Q."/>
            <person name="Zhou J."/>
            <person name="Richardson P."/>
            <person name="Fields M.W."/>
        </authorList>
    </citation>
    <scope>NUCLEOTIDE SEQUENCE [LARGE SCALE GENOMIC DNA]</scope>
    <source>
        <strain>QYMF</strain>
    </source>
</reference>
<organism>
    <name type="scientific">Alkaliphilus metalliredigens (strain QYMF)</name>
    <dbReference type="NCBI Taxonomy" id="293826"/>
    <lineage>
        <taxon>Bacteria</taxon>
        <taxon>Bacillati</taxon>
        <taxon>Bacillota</taxon>
        <taxon>Clostridia</taxon>
        <taxon>Peptostreptococcales</taxon>
        <taxon>Natronincolaceae</taxon>
        <taxon>Alkaliphilus</taxon>
    </lineage>
</organism>
<gene>
    <name evidence="1" type="primary">rplD</name>
    <name type="ordered locus">Amet_4477</name>
</gene>
<proteinExistence type="inferred from homology"/>